<evidence type="ECO:0000255" key="1">
    <source>
        <dbReference type="HAMAP-Rule" id="MF_00182"/>
    </source>
</evidence>
<comment type="function">
    <text evidence="1">Attaches a formyl group to the free amino group of methionyl-tRNA(fMet). The formyl group appears to play a dual role in the initiator identity of N-formylmethionyl-tRNA by promoting its recognition by IF2 and preventing the misappropriation of this tRNA by the elongation apparatus.</text>
</comment>
<comment type="catalytic activity">
    <reaction evidence="1">
        <text>L-methionyl-tRNA(fMet) + (6R)-10-formyltetrahydrofolate = N-formyl-L-methionyl-tRNA(fMet) + (6S)-5,6,7,8-tetrahydrofolate + H(+)</text>
        <dbReference type="Rhea" id="RHEA:24380"/>
        <dbReference type="Rhea" id="RHEA-COMP:9952"/>
        <dbReference type="Rhea" id="RHEA-COMP:9953"/>
        <dbReference type="ChEBI" id="CHEBI:15378"/>
        <dbReference type="ChEBI" id="CHEBI:57453"/>
        <dbReference type="ChEBI" id="CHEBI:78530"/>
        <dbReference type="ChEBI" id="CHEBI:78844"/>
        <dbReference type="ChEBI" id="CHEBI:195366"/>
        <dbReference type="EC" id="2.1.2.9"/>
    </reaction>
</comment>
<comment type="similarity">
    <text evidence="1">Belongs to the Fmt family.</text>
</comment>
<gene>
    <name evidence="1" type="primary">fmt</name>
    <name type="ordered locus">SPy_1628</name>
    <name type="ordered locus">M5005_Spy1338</name>
</gene>
<reference key="1">
    <citation type="journal article" date="2001" name="Proc. Natl. Acad. Sci. U.S.A.">
        <title>Complete genome sequence of an M1 strain of Streptococcus pyogenes.</title>
        <authorList>
            <person name="Ferretti J.J."/>
            <person name="McShan W.M."/>
            <person name="Ajdic D.J."/>
            <person name="Savic D.J."/>
            <person name="Savic G."/>
            <person name="Lyon K."/>
            <person name="Primeaux C."/>
            <person name="Sezate S."/>
            <person name="Suvorov A.N."/>
            <person name="Kenton S."/>
            <person name="Lai H.S."/>
            <person name="Lin S.P."/>
            <person name="Qian Y."/>
            <person name="Jia H.G."/>
            <person name="Najar F.Z."/>
            <person name="Ren Q."/>
            <person name="Zhu H."/>
            <person name="Song L."/>
            <person name="White J."/>
            <person name="Yuan X."/>
            <person name="Clifton S.W."/>
            <person name="Roe B.A."/>
            <person name="McLaughlin R.E."/>
        </authorList>
    </citation>
    <scope>NUCLEOTIDE SEQUENCE [LARGE SCALE GENOMIC DNA]</scope>
    <source>
        <strain>ATCC 700294 / SF370 / Serotype M1</strain>
    </source>
</reference>
<reference key="2">
    <citation type="journal article" date="2005" name="J. Infect. Dis.">
        <title>Evolutionary origin and emergence of a highly successful clone of serotype M1 group A Streptococcus involved multiple horizontal gene transfer events.</title>
        <authorList>
            <person name="Sumby P."/>
            <person name="Porcella S.F."/>
            <person name="Madrigal A.G."/>
            <person name="Barbian K.D."/>
            <person name="Virtaneva K."/>
            <person name="Ricklefs S.M."/>
            <person name="Sturdevant D.E."/>
            <person name="Graham M.R."/>
            <person name="Vuopio-Varkila J."/>
            <person name="Hoe N.P."/>
            <person name="Musser J.M."/>
        </authorList>
    </citation>
    <scope>NUCLEOTIDE SEQUENCE [LARGE SCALE GENOMIC DNA]</scope>
    <source>
        <strain>ATCC BAA-947 / MGAS5005 / Serotype M1</strain>
    </source>
</reference>
<accession>Q99YM7</accession>
<accession>Q48XG9</accession>
<feature type="chain" id="PRO_0000083060" description="Methionyl-tRNA formyltransferase">
    <location>
        <begin position="1"/>
        <end position="311"/>
    </location>
</feature>
<feature type="binding site" evidence="1">
    <location>
        <begin position="110"/>
        <end position="113"/>
    </location>
    <ligand>
        <name>(6S)-5,6,7,8-tetrahydrofolate</name>
        <dbReference type="ChEBI" id="CHEBI:57453"/>
    </ligand>
</feature>
<protein>
    <recommendedName>
        <fullName evidence="1">Methionyl-tRNA formyltransferase</fullName>
        <ecNumber evidence="1">2.1.2.9</ecNumber>
    </recommendedName>
</protein>
<keyword id="KW-0648">Protein biosynthesis</keyword>
<keyword id="KW-1185">Reference proteome</keyword>
<keyword id="KW-0808">Transferase</keyword>
<name>FMT_STRP1</name>
<organism>
    <name type="scientific">Streptococcus pyogenes serotype M1</name>
    <dbReference type="NCBI Taxonomy" id="301447"/>
    <lineage>
        <taxon>Bacteria</taxon>
        <taxon>Bacillati</taxon>
        <taxon>Bacillota</taxon>
        <taxon>Bacilli</taxon>
        <taxon>Lactobacillales</taxon>
        <taxon>Streptococcaceae</taxon>
        <taxon>Streptococcus</taxon>
    </lineage>
</organism>
<dbReference type="EC" id="2.1.2.9" evidence="1"/>
<dbReference type="EMBL" id="AE004092">
    <property type="protein sequence ID" value="AAK34399.1"/>
    <property type="molecule type" value="Genomic_DNA"/>
</dbReference>
<dbReference type="EMBL" id="CP000017">
    <property type="protein sequence ID" value="AAZ51956.1"/>
    <property type="molecule type" value="Genomic_DNA"/>
</dbReference>
<dbReference type="RefSeq" id="NP_269678.1">
    <property type="nucleotide sequence ID" value="NC_002737.2"/>
</dbReference>
<dbReference type="SMR" id="Q99YM7"/>
<dbReference type="PaxDb" id="1314-HKU360_01386"/>
<dbReference type="KEGG" id="spy:SPy_1628"/>
<dbReference type="KEGG" id="spz:M5005_Spy1338"/>
<dbReference type="PATRIC" id="fig|160490.10.peg.1420"/>
<dbReference type="HOGENOM" id="CLU_033347_1_1_9"/>
<dbReference type="OMA" id="GITTMLM"/>
<dbReference type="Proteomes" id="UP000000750">
    <property type="component" value="Chromosome"/>
</dbReference>
<dbReference type="GO" id="GO:0005829">
    <property type="term" value="C:cytosol"/>
    <property type="evidence" value="ECO:0007669"/>
    <property type="project" value="TreeGrafter"/>
</dbReference>
<dbReference type="GO" id="GO:0004479">
    <property type="term" value="F:methionyl-tRNA formyltransferase activity"/>
    <property type="evidence" value="ECO:0007669"/>
    <property type="project" value="UniProtKB-UniRule"/>
</dbReference>
<dbReference type="CDD" id="cd08646">
    <property type="entry name" value="FMT_core_Met-tRNA-FMT_N"/>
    <property type="match status" value="1"/>
</dbReference>
<dbReference type="CDD" id="cd08704">
    <property type="entry name" value="Met_tRNA_FMT_C"/>
    <property type="match status" value="1"/>
</dbReference>
<dbReference type="FunFam" id="3.40.50.170:FF:000004">
    <property type="entry name" value="Methionyl-tRNA formyltransferase"/>
    <property type="match status" value="1"/>
</dbReference>
<dbReference type="Gene3D" id="3.10.25.10">
    <property type="entry name" value="Formyl transferase, C-terminal domain"/>
    <property type="match status" value="1"/>
</dbReference>
<dbReference type="Gene3D" id="3.40.50.170">
    <property type="entry name" value="Formyl transferase, N-terminal domain"/>
    <property type="match status" value="1"/>
</dbReference>
<dbReference type="HAMAP" id="MF_00182">
    <property type="entry name" value="Formyl_trans"/>
    <property type="match status" value="1"/>
</dbReference>
<dbReference type="InterPro" id="IPR005794">
    <property type="entry name" value="Fmt"/>
</dbReference>
<dbReference type="InterPro" id="IPR005793">
    <property type="entry name" value="Formyl_trans_C"/>
</dbReference>
<dbReference type="InterPro" id="IPR037022">
    <property type="entry name" value="Formyl_trans_C_sf"/>
</dbReference>
<dbReference type="InterPro" id="IPR002376">
    <property type="entry name" value="Formyl_transf_N"/>
</dbReference>
<dbReference type="InterPro" id="IPR036477">
    <property type="entry name" value="Formyl_transf_N_sf"/>
</dbReference>
<dbReference type="InterPro" id="IPR011034">
    <property type="entry name" value="Formyl_transferase-like_C_sf"/>
</dbReference>
<dbReference type="InterPro" id="IPR001555">
    <property type="entry name" value="GART_AS"/>
</dbReference>
<dbReference type="InterPro" id="IPR044135">
    <property type="entry name" value="Met-tRNA-FMT_C"/>
</dbReference>
<dbReference type="InterPro" id="IPR041711">
    <property type="entry name" value="Met-tRNA-FMT_N"/>
</dbReference>
<dbReference type="NCBIfam" id="TIGR00460">
    <property type="entry name" value="fmt"/>
    <property type="match status" value="1"/>
</dbReference>
<dbReference type="PANTHER" id="PTHR11138">
    <property type="entry name" value="METHIONYL-TRNA FORMYLTRANSFERASE"/>
    <property type="match status" value="1"/>
</dbReference>
<dbReference type="PANTHER" id="PTHR11138:SF5">
    <property type="entry name" value="METHIONYL-TRNA FORMYLTRANSFERASE, MITOCHONDRIAL"/>
    <property type="match status" value="1"/>
</dbReference>
<dbReference type="Pfam" id="PF02911">
    <property type="entry name" value="Formyl_trans_C"/>
    <property type="match status" value="1"/>
</dbReference>
<dbReference type="Pfam" id="PF00551">
    <property type="entry name" value="Formyl_trans_N"/>
    <property type="match status" value="1"/>
</dbReference>
<dbReference type="SUPFAM" id="SSF50486">
    <property type="entry name" value="FMT C-terminal domain-like"/>
    <property type="match status" value="1"/>
</dbReference>
<dbReference type="SUPFAM" id="SSF53328">
    <property type="entry name" value="Formyltransferase"/>
    <property type="match status" value="1"/>
</dbReference>
<dbReference type="PROSITE" id="PS00373">
    <property type="entry name" value="GART"/>
    <property type="match status" value="1"/>
</dbReference>
<proteinExistence type="inferred from homology"/>
<sequence>MIKLLFMGTPQFSATVLKGLLDNPAYEILGVVTQPDRAVGRKKDIKVTPVKQLALEHGISIYQPEKLSGSQELIEIMGLGADGIITAAFGQFLPTILLDSVSFAINVHASLLPKYRGGAPIHYAIMNGDKEAGVTIMEMIKEMDAGDMVAKASTPILETDNVGTLFEKLAIIGRDLLLDSLPAYLSGELKPIPQDHSQATFSPNISPEHEKLDWTMSNQEVFNHIRGMNPWPVAHTFLEGQRLKIYEAQLAEGEGLPGQVVVKTKKSLVIATGQGALSLIVVQPAGKPKMSIIDFLNGIGRKLEVGDIIGR</sequence>